<protein>
    <recommendedName>
        <fullName>Uncharacterized gene E4 protein</fullName>
    </recommendedName>
</protein>
<name>VGE4_EHV2</name>
<dbReference type="EMBL" id="U20824">
    <property type="protein sequence ID" value="AAC13792.1"/>
    <property type="molecule type" value="Genomic_DNA"/>
</dbReference>
<dbReference type="PIR" id="S55599">
    <property type="entry name" value="S55599"/>
</dbReference>
<dbReference type="RefSeq" id="NP_042601.1">
    <property type="nucleotide sequence ID" value="NC_001650.2"/>
</dbReference>
<dbReference type="SMR" id="Q66610"/>
<dbReference type="GeneID" id="1461052"/>
<dbReference type="KEGG" id="vg:1461052"/>
<dbReference type="Proteomes" id="UP000007083">
    <property type="component" value="Segment"/>
</dbReference>
<dbReference type="GO" id="GO:0042981">
    <property type="term" value="P:regulation of apoptotic process"/>
    <property type="evidence" value="ECO:0007669"/>
    <property type="project" value="InterPro"/>
</dbReference>
<dbReference type="InterPro" id="IPR036834">
    <property type="entry name" value="Bcl-2-like_sf"/>
</dbReference>
<dbReference type="InterPro" id="IPR046371">
    <property type="entry name" value="Bcl-2_BH1-3"/>
</dbReference>
<dbReference type="InterPro" id="IPR002475">
    <property type="entry name" value="Bcl2-like"/>
</dbReference>
<dbReference type="InterPro" id="IPR010677">
    <property type="entry name" value="HHV-4_BALF1"/>
</dbReference>
<dbReference type="Pfam" id="PF06861">
    <property type="entry name" value="BALF1"/>
    <property type="match status" value="1"/>
</dbReference>
<dbReference type="SMART" id="SM00337">
    <property type="entry name" value="BCL"/>
    <property type="match status" value="1"/>
</dbReference>
<dbReference type="SUPFAM" id="SSF56854">
    <property type="entry name" value="Bcl-2 inhibitors of programmed cell death"/>
    <property type="match status" value="1"/>
</dbReference>
<dbReference type="PROSITE" id="PS50062">
    <property type="entry name" value="BCL2_FAMILY"/>
    <property type="match status" value="1"/>
</dbReference>
<feature type="chain" id="PRO_0000405992" description="Uncharacterized gene E4 protein">
    <location>
        <begin position="1"/>
        <end position="183"/>
    </location>
</feature>
<organism>
    <name type="scientific">Equine herpesvirus 2 (strain 86/87)</name>
    <name type="common">EHV-2</name>
    <dbReference type="NCBI Taxonomy" id="82831"/>
    <lineage>
        <taxon>Viruses</taxon>
        <taxon>Duplodnaviria</taxon>
        <taxon>Heunggongvirae</taxon>
        <taxon>Peploviricota</taxon>
        <taxon>Herviviricetes</taxon>
        <taxon>Herpesvirales</taxon>
        <taxon>Orthoherpesviridae</taxon>
        <taxon>Gammaherpesvirinae</taxon>
        <taxon>Percavirus</taxon>
        <taxon>Percavirus equidgamma2</taxon>
        <taxon>Equid gammaherpesvirus 2</taxon>
    </lineage>
</organism>
<proteinExistence type="inferred from homology"/>
<keyword id="KW-1185">Reference proteome</keyword>
<sequence>MVPSREFFEEEMDRVLENEAQKLSLTNLLKNVFAQTLDMKPEGVLTTEEALLAWLVDECKKEYLHQLIELVMQVPVSVEAPTTSAINNSLGIIRQTHGQGEDNFGRLLCSLSFASCFLELVLQSDERCLSVFASELAKFYVESQNLWLAYSGGLSAGLRERFPRSWLYFALKQKWLRFIYFFK</sequence>
<reference key="1">
    <citation type="journal article" date="1995" name="J. Mol. Biol.">
        <title>The DNA sequence of equine herpesvirus 2.</title>
        <authorList>
            <person name="Telford E.A.R."/>
            <person name="Watson M.S."/>
            <person name="Aird H.C."/>
            <person name="Perry J."/>
            <person name="Davison A.J."/>
        </authorList>
    </citation>
    <scope>NUCLEOTIDE SEQUENCE [LARGE SCALE GENOMIC DNA]</scope>
</reference>
<accession>Q66610</accession>
<evidence type="ECO:0000305" key="1"/>
<organismHost>
    <name type="scientific">Equus caballus</name>
    <name type="common">Horse</name>
    <dbReference type="NCBI Taxonomy" id="9796"/>
</organismHost>
<comment type="similarity">
    <text evidence="1">Belongs to the Bcl-2 family.</text>
</comment>
<gene>
    <name type="primary">E4</name>
</gene>